<dbReference type="EC" id="2.3.2.23"/>
<dbReference type="EMBL" id="EU124673">
    <property type="protein sequence ID" value="ABV25624.1"/>
    <property type="molecule type" value="mRNA"/>
</dbReference>
<dbReference type="EMBL" id="BC142569">
    <property type="protein sequence ID" value="AAI42570.1"/>
    <property type="molecule type" value="mRNA"/>
</dbReference>
<dbReference type="RefSeq" id="NP_001093355.1">
    <property type="nucleotide sequence ID" value="NM_001099885.1"/>
</dbReference>
<dbReference type="SMR" id="A5PKP9"/>
<dbReference type="GeneID" id="100101299"/>
<dbReference type="GeneID" id="108712728"/>
<dbReference type="KEGG" id="xla:100101299"/>
<dbReference type="KEGG" id="xla:108712728"/>
<dbReference type="AGR" id="Xenbase:XB-GENE-962538"/>
<dbReference type="CTD" id="100101299"/>
<dbReference type="CTD" id="108712728"/>
<dbReference type="Xenbase" id="XB-GENE-962538">
    <property type="gene designation" value="ube2d4.L"/>
</dbReference>
<dbReference type="OrthoDB" id="7851174at2759"/>
<dbReference type="UniPathway" id="UPA00143"/>
<dbReference type="Proteomes" id="UP000186698">
    <property type="component" value="Chromosome 3L"/>
</dbReference>
<dbReference type="Proteomes" id="UP000186698">
    <property type="component" value="Chromosome 3S"/>
</dbReference>
<dbReference type="Bgee" id="100101299">
    <property type="expression patterns" value="Expressed in muscle tissue and 19 other cell types or tissues"/>
</dbReference>
<dbReference type="GO" id="GO:0005634">
    <property type="term" value="C:nucleus"/>
    <property type="evidence" value="ECO:0000318"/>
    <property type="project" value="GO_Central"/>
</dbReference>
<dbReference type="GO" id="GO:0005524">
    <property type="term" value="F:ATP binding"/>
    <property type="evidence" value="ECO:0007669"/>
    <property type="project" value="UniProtKB-KW"/>
</dbReference>
<dbReference type="GO" id="GO:0031435">
    <property type="term" value="F:mitogen-activated protein kinase kinase kinase binding"/>
    <property type="evidence" value="ECO:0000353"/>
    <property type="project" value="UniProtKB"/>
</dbReference>
<dbReference type="GO" id="GO:0043130">
    <property type="term" value="F:ubiquitin binding"/>
    <property type="evidence" value="ECO:0000314"/>
    <property type="project" value="UniProtKB"/>
</dbReference>
<dbReference type="GO" id="GO:0061631">
    <property type="term" value="F:ubiquitin conjugating enzyme activity"/>
    <property type="evidence" value="ECO:0000318"/>
    <property type="project" value="GO_Central"/>
</dbReference>
<dbReference type="GO" id="GO:0004842">
    <property type="term" value="F:ubiquitin-protein transferase activity"/>
    <property type="evidence" value="ECO:0000314"/>
    <property type="project" value="UniProtKB"/>
</dbReference>
<dbReference type="GO" id="GO:0039020">
    <property type="term" value="P:pronephric nephron tubule development"/>
    <property type="evidence" value="ECO:0000315"/>
    <property type="project" value="UniProtKB"/>
</dbReference>
<dbReference type="GO" id="GO:0070936">
    <property type="term" value="P:protein K48-linked ubiquitination"/>
    <property type="evidence" value="ECO:0000318"/>
    <property type="project" value="GO_Central"/>
</dbReference>
<dbReference type="GO" id="GO:0016567">
    <property type="term" value="P:protein ubiquitination"/>
    <property type="evidence" value="ECO:0000314"/>
    <property type="project" value="UniProtKB"/>
</dbReference>
<dbReference type="GO" id="GO:0006511">
    <property type="term" value="P:ubiquitin-dependent protein catabolic process"/>
    <property type="evidence" value="ECO:0000318"/>
    <property type="project" value="GO_Central"/>
</dbReference>
<dbReference type="CDD" id="cd23792">
    <property type="entry name" value="UBCc_UBE2D"/>
    <property type="match status" value="1"/>
</dbReference>
<dbReference type="FunFam" id="3.10.110.10:FF:000101">
    <property type="entry name" value="Ubiquitin-conjugating enzyme E2 D2"/>
    <property type="match status" value="1"/>
</dbReference>
<dbReference type="Gene3D" id="3.10.110.10">
    <property type="entry name" value="Ubiquitin Conjugating Enzyme"/>
    <property type="match status" value="1"/>
</dbReference>
<dbReference type="InterPro" id="IPR000608">
    <property type="entry name" value="UBQ-conjugat_E2_core"/>
</dbReference>
<dbReference type="InterPro" id="IPR023313">
    <property type="entry name" value="UBQ-conjugating_AS"/>
</dbReference>
<dbReference type="InterPro" id="IPR016135">
    <property type="entry name" value="UBQ-conjugating_enzyme/RWD"/>
</dbReference>
<dbReference type="PANTHER" id="PTHR24068">
    <property type="entry name" value="UBIQUITIN-CONJUGATING ENZYME E2"/>
    <property type="match status" value="1"/>
</dbReference>
<dbReference type="Pfam" id="PF00179">
    <property type="entry name" value="UQ_con"/>
    <property type="match status" value="1"/>
</dbReference>
<dbReference type="SMART" id="SM00212">
    <property type="entry name" value="UBCc"/>
    <property type="match status" value="1"/>
</dbReference>
<dbReference type="SUPFAM" id="SSF54495">
    <property type="entry name" value="UBC-like"/>
    <property type="match status" value="1"/>
</dbReference>
<dbReference type="PROSITE" id="PS00183">
    <property type="entry name" value="UBC_1"/>
    <property type="match status" value="1"/>
</dbReference>
<dbReference type="PROSITE" id="PS50127">
    <property type="entry name" value="UBC_2"/>
    <property type="match status" value="1"/>
</dbReference>
<protein>
    <recommendedName>
        <fullName evidence="1">Ubiquitin-conjugating enzyme E2 D4</fullName>
        <ecNumber>2.3.2.23</ecNumber>
    </recommendedName>
    <alternativeName>
        <fullName evidence="1">E2 ubiquitin-conjugating enzyme D4</fullName>
    </alternativeName>
    <alternativeName>
        <fullName evidence="1">Ubiquitin carrier protein D4</fullName>
    </alternativeName>
    <alternativeName>
        <fullName evidence="1">Ubiquitin-protein ligase D4</fullName>
    </alternativeName>
</protein>
<reference key="1">
    <citation type="journal article" date="2008" name="Differentiation">
        <title>A ubiquitin-conjugating enzyme, ube2d3.2, regulates xMLK2 and pronephros formation in Xenopus.</title>
        <authorList>
            <person name="Jean S."/>
            <person name="Moss T."/>
        </authorList>
    </citation>
    <scope>NUCLEOTIDE SEQUENCE [MRNA]</scope>
    <scope>FUNCTION</scope>
    <scope>INTERACTION WITH MAP3K10</scope>
    <scope>TISSUE SPECIFICITY</scope>
    <scope>DEVELOPMENTAL STAGE</scope>
    <scope>MUTAGENESIS OF CYS-85</scope>
</reference>
<reference key="2">
    <citation type="submission" date="2007-06" db="EMBL/GenBank/DDBJ databases">
        <authorList>
            <consortium name="NIH - Xenopus Gene Collection (XGC) project"/>
        </authorList>
    </citation>
    <scope>NUCLEOTIDE SEQUENCE [LARGE SCALE MRNA]</scope>
    <source>
        <tissue evidence="6">Neurula</tissue>
    </source>
</reference>
<proteinExistence type="evidence at protein level"/>
<evidence type="ECO:0000250" key="1">
    <source>
        <dbReference type="UniProtKB" id="Q9Y2X8"/>
    </source>
</evidence>
<evidence type="ECO:0000255" key="2">
    <source>
        <dbReference type="PROSITE-ProRule" id="PRU00388"/>
    </source>
</evidence>
<evidence type="ECO:0000255" key="3">
    <source>
        <dbReference type="PROSITE-ProRule" id="PRU10133"/>
    </source>
</evidence>
<evidence type="ECO:0000269" key="4">
    <source>
    </source>
</evidence>
<evidence type="ECO:0000303" key="5">
    <source>
    </source>
</evidence>
<evidence type="ECO:0000312" key="6">
    <source>
        <dbReference type="EMBL" id="AAI42570.1"/>
    </source>
</evidence>
<name>UB2D4_XENLA</name>
<feature type="chain" id="PRO_0000397918" description="Ubiquitin-conjugating enzyme E2 D4">
    <location>
        <begin position="1"/>
        <end position="147"/>
    </location>
</feature>
<feature type="domain" description="UBC core" evidence="2">
    <location>
        <begin position="1"/>
        <end position="147"/>
    </location>
</feature>
<feature type="active site" description="Glycyl thioester intermediate" evidence="2">
    <location>
        <position position="85"/>
    </location>
</feature>
<feature type="mutagenesis site" description="Catalytically inactive. No effect on pronephros development." evidence="4">
    <original>C</original>
    <variation>A</variation>
    <location>
        <position position="85"/>
    </location>
</feature>
<organism>
    <name type="scientific">Xenopus laevis</name>
    <name type="common">African clawed frog</name>
    <dbReference type="NCBI Taxonomy" id="8355"/>
    <lineage>
        <taxon>Eukaryota</taxon>
        <taxon>Metazoa</taxon>
        <taxon>Chordata</taxon>
        <taxon>Craniata</taxon>
        <taxon>Vertebrata</taxon>
        <taxon>Euteleostomi</taxon>
        <taxon>Amphibia</taxon>
        <taxon>Batrachia</taxon>
        <taxon>Anura</taxon>
        <taxon>Pipoidea</taxon>
        <taxon>Pipidae</taxon>
        <taxon>Xenopodinae</taxon>
        <taxon>Xenopus</taxon>
        <taxon>Xenopus</taxon>
    </lineage>
</organism>
<keyword id="KW-0067">ATP-binding</keyword>
<keyword id="KW-0217">Developmental protein</keyword>
<keyword id="KW-0547">Nucleotide-binding</keyword>
<keyword id="KW-1185">Reference proteome</keyword>
<keyword id="KW-0808">Transferase</keyword>
<keyword id="KW-0833">Ubl conjugation pathway</keyword>
<gene>
    <name type="primary">ube2d4</name>
    <name evidence="5" type="synonym">ube2d3.2</name>
</gene>
<comment type="function">
    <text evidence="2 4">Catalyzes the covalent attachment of ubiquitin to other proteins. Regulates pronephros development, possibly by promoting ubiquitination and thus inactivation or degradation of map3k10/mlk2.</text>
</comment>
<comment type="catalytic activity">
    <reaction evidence="1 2 3">
        <text>S-ubiquitinyl-[E1 ubiquitin-activating enzyme]-L-cysteine + [E2 ubiquitin-conjugating enzyme]-L-cysteine = [E1 ubiquitin-activating enzyme]-L-cysteine + S-ubiquitinyl-[E2 ubiquitin-conjugating enzyme]-L-cysteine.</text>
        <dbReference type="EC" id="2.3.2.23"/>
    </reaction>
</comment>
<comment type="pathway">
    <text evidence="1 2">Protein modification; protein ubiquitination.</text>
</comment>
<comment type="subunit">
    <text evidence="4">Interacts with map3k10/mlk2.</text>
</comment>
<comment type="tissue specificity">
    <text evidence="4">At embryonic stages 28 to 35, expressed in the somites, eye primordia, otic vesicle and branchial arches. By stage 35, also weakly expressed in the pronephros.</text>
</comment>
<comment type="developmental stage">
    <text evidence="4">Expressed maternally. Present at near constant levels throughout early development.</text>
</comment>
<comment type="similarity">
    <text evidence="2">Belongs to the ubiquitin-conjugating enzyme family.</text>
</comment>
<sequence length="147" mass="16677">MALKRIQKELMDLQRDPPAQCSAGPVGEDLFHWQATIMGPNDSPFQGGVFFLTIHFPTDYPFKPPKVAFTTKIYHPNINSNGSICLDILRSQWSPALTVSKVLLSICSLLCDPNPDDPLVPEIAHTYKADREKYNRLAREWTQKYAM</sequence>
<accession>A5PKP9</accession>